<gene>
    <name evidence="1" type="primary">esxN</name>
    <name type="ordered locus">MT1842</name>
    <name type="ORF">MTV049.15</name>
</gene>
<keyword id="KW-1185">Reference proteome</keyword>
<keyword id="KW-0964">Secreted</keyword>
<organism>
    <name type="scientific">Mycobacterium tuberculosis (strain CDC 1551 / Oshkosh)</name>
    <dbReference type="NCBI Taxonomy" id="83331"/>
    <lineage>
        <taxon>Bacteria</taxon>
        <taxon>Bacillati</taxon>
        <taxon>Actinomycetota</taxon>
        <taxon>Actinomycetes</taxon>
        <taxon>Mycobacteriales</taxon>
        <taxon>Mycobacteriaceae</taxon>
        <taxon>Mycobacterium</taxon>
        <taxon>Mycobacterium tuberculosis complex</taxon>
    </lineage>
</organism>
<protein>
    <recommendedName>
        <fullName evidence="1">ESAT-6-like protein EsxN</fullName>
    </recommendedName>
</protein>
<proteinExistence type="inferred from homology"/>
<dbReference type="EMBL" id="AE000516">
    <property type="protein sequence ID" value="AAK46113.1"/>
    <property type="molecule type" value="Genomic_DNA"/>
</dbReference>
<dbReference type="PIR" id="B70930">
    <property type="entry name" value="B70930"/>
</dbReference>
<dbReference type="RefSeq" id="WP_003408840.1">
    <property type="nucleotide sequence ID" value="NZ_KK341227.1"/>
</dbReference>
<dbReference type="SMR" id="P9WNJ2"/>
<dbReference type="GeneID" id="45426331"/>
<dbReference type="KEGG" id="mtc:MT1842"/>
<dbReference type="PATRIC" id="fig|83331.31.peg.1984"/>
<dbReference type="HOGENOM" id="CLU_192559_0_0_11"/>
<dbReference type="Proteomes" id="UP000001020">
    <property type="component" value="Chromosome"/>
</dbReference>
<dbReference type="GO" id="GO:0005576">
    <property type="term" value="C:extracellular region"/>
    <property type="evidence" value="ECO:0007669"/>
    <property type="project" value="UniProtKB-SubCell"/>
</dbReference>
<dbReference type="FunFam" id="1.10.287.1060:FF:000004">
    <property type="entry name" value="ESAT-6-like protein EsxI"/>
    <property type="match status" value="1"/>
</dbReference>
<dbReference type="Gene3D" id="1.10.287.1060">
    <property type="entry name" value="ESAT-6-like"/>
    <property type="match status" value="1"/>
</dbReference>
<dbReference type="InterPro" id="IPR009416">
    <property type="entry name" value="ESAT-6-like_Myco"/>
</dbReference>
<dbReference type="InterPro" id="IPR036689">
    <property type="entry name" value="ESAT-6-like_sf"/>
</dbReference>
<dbReference type="InterPro" id="IPR010310">
    <property type="entry name" value="T7SS_ESAT-6-like"/>
</dbReference>
<dbReference type="Pfam" id="PF06013">
    <property type="entry name" value="WXG100"/>
    <property type="match status" value="1"/>
</dbReference>
<dbReference type="PIRSF" id="PIRSF037656">
    <property type="entry name" value="DUF1066"/>
    <property type="match status" value="1"/>
</dbReference>
<dbReference type="SUPFAM" id="SSF140453">
    <property type="entry name" value="EsxAB dimer-like"/>
    <property type="match status" value="1"/>
</dbReference>
<feature type="chain" id="PRO_0000427117" description="ESAT-6-like protein EsxN">
    <location>
        <begin position="1"/>
        <end position="94"/>
    </location>
</feature>
<name>ESXN_MYCTO</name>
<comment type="subcellular location">
    <subcellularLocation>
        <location evidence="1">Secreted</location>
    </subcellularLocation>
    <text evidence="1">Secreted via the ESX-5 / type VII secretion system (T7SS).</text>
</comment>
<comment type="similarity">
    <text evidence="2">Belongs to the WXG100 family. ESAT-6 subfamily.</text>
</comment>
<sequence length="94" mass="9942">MTINYQFGDVDAHGAMIRAQAASLEAEHQAIVRDVLAAGDFWGGAGSVACQEFITQLGRNFQVIYEQANAHGQKVQAAGNNMAQTDSAVGSSWA</sequence>
<evidence type="ECO:0000250" key="1">
    <source>
        <dbReference type="UniProtKB" id="P9WNJ3"/>
    </source>
</evidence>
<evidence type="ECO:0000305" key="2"/>
<reference key="1">
    <citation type="journal article" date="2002" name="J. Bacteriol.">
        <title>Whole-genome comparison of Mycobacterium tuberculosis clinical and laboratory strains.</title>
        <authorList>
            <person name="Fleischmann R.D."/>
            <person name="Alland D."/>
            <person name="Eisen J.A."/>
            <person name="Carpenter L."/>
            <person name="White O."/>
            <person name="Peterson J.D."/>
            <person name="DeBoy R.T."/>
            <person name="Dodson R.J."/>
            <person name="Gwinn M.L."/>
            <person name="Haft D.H."/>
            <person name="Hickey E.K."/>
            <person name="Kolonay J.F."/>
            <person name="Nelson W.C."/>
            <person name="Umayam L.A."/>
            <person name="Ermolaeva M.D."/>
            <person name="Salzberg S.L."/>
            <person name="Delcher A."/>
            <person name="Utterback T.R."/>
            <person name="Weidman J.F."/>
            <person name="Khouri H.M."/>
            <person name="Gill J."/>
            <person name="Mikula A."/>
            <person name="Bishai W."/>
            <person name="Jacobs W.R. Jr."/>
            <person name="Venter J.C."/>
            <person name="Fraser C.M."/>
        </authorList>
    </citation>
    <scope>NUCLEOTIDE SEQUENCE [LARGE SCALE GENOMIC DNA]</scope>
    <source>
        <strain>CDC 1551 / Oshkosh</strain>
    </source>
</reference>
<accession>P9WNJ2</accession>
<accession>L0TAM3</accession>
<accession>O53942</accession>
<accession>P0A570</accession>